<keyword id="KW-0067">ATP-binding</keyword>
<keyword id="KW-0315">Glutamine amidotransferase</keyword>
<keyword id="KW-0436">Ligase</keyword>
<keyword id="KW-0460">Magnesium</keyword>
<keyword id="KW-0479">Metal-binding</keyword>
<keyword id="KW-0547">Nucleotide-binding</keyword>
<keyword id="KW-0665">Pyrimidine biosynthesis</keyword>
<name>PYRG_XANOP</name>
<reference key="1">
    <citation type="journal article" date="2008" name="BMC Genomics">
        <title>Genome sequence and rapid evolution of the rice pathogen Xanthomonas oryzae pv. oryzae PXO99A.</title>
        <authorList>
            <person name="Salzberg S.L."/>
            <person name="Sommer D.D."/>
            <person name="Schatz M.C."/>
            <person name="Phillippy A.M."/>
            <person name="Rabinowicz P.D."/>
            <person name="Tsuge S."/>
            <person name="Furutani A."/>
            <person name="Ochiai H."/>
            <person name="Delcher A.L."/>
            <person name="Kelley D."/>
            <person name="Madupu R."/>
            <person name="Puiu D."/>
            <person name="Radune D."/>
            <person name="Shumway M."/>
            <person name="Trapnell C."/>
            <person name="Aparna G."/>
            <person name="Jha G."/>
            <person name="Pandey A."/>
            <person name="Patil P.B."/>
            <person name="Ishihara H."/>
            <person name="Meyer D.F."/>
            <person name="Szurek B."/>
            <person name="Verdier V."/>
            <person name="Koebnik R."/>
            <person name="Dow J.M."/>
            <person name="Ryan R.P."/>
            <person name="Hirata H."/>
            <person name="Tsuyumu S."/>
            <person name="Won Lee S."/>
            <person name="Seo Y.-S."/>
            <person name="Sriariyanum M."/>
            <person name="Ronald P.C."/>
            <person name="Sonti R.V."/>
            <person name="Van Sluys M.-A."/>
            <person name="Leach J.E."/>
            <person name="White F.F."/>
            <person name="Bogdanove A.J."/>
        </authorList>
    </citation>
    <scope>NUCLEOTIDE SEQUENCE [LARGE SCALE GENOMIC DNA]</scope>
    <source>
        <strain>PXO99A</strain>
    </source>
</reference>
<comment type="function">
    <text evidence="1">Catalyzes the ATP-dependent amination of UTP to CTP with either L-glutamine or ammonia as the source of nitrogen. Regulates intracellular CTP levels through interactions with the four ribonucleotide triphosphates.</text>
</comment>
<comment type="catalytic activity">
    <reaction evidence="1">
        <text>UTP + L-glutamine + ATP + H2O = CTP + L-glutamate + ADP + phosphate + 2 H(+)</text>
        <dbReference type="Rhea" id="RHEA:26426"/>
        <dbReference type="ChEBI" id="CHEBI:15377"/>
        <dbReference type="ChEBI" id="CHEBI:15378"/>
        <dbReference type="ChEBI" id="CHEBI:29985"/>
        <dbReference type="ChEBI" id="CHEBI:30616"/>
        <dbReference type="ChEBI" id="CHEBI:37563"/>
        <dbReference type="ChEBI" id="CHEBI:43474"/>
        <dbReference type="ChEBI" id="CHEBI:46398"/>
        <dbReference type="ChEBI" id="CHEBI:58359"/>
        <dbReference type="ChEBI" id="CHEBI:456216"/>
        <dbReference type="EC" id="6.3.4.2"/>
    </reaction>
</comment>
<comment type="catalytic activity">
    <reaction evidence="1">
        <text>L-glutamine + H2O = L-glutamate + NH4(+)</text>
        <dbReference type="Rhea" id="RHEA:15889"/>
        <dbReference type="ChEBI" id="CHEBI:15377"/>
        <dbReference type="ChEBI" id="CHEBI:28938"/>
        <dbReference type="ChEBI" id="CHEBI:29985"/>
        <dbReference type="ChEBI" id="CHEBI:58359"/>
    </reaction>
</comment>
<comment type="catalytic activity">
    <reaction evidence="1">
        <text>UTP + NH4(+) + ATP = CTP + ADP + phosphate + 2 H(+)</text>
        <dbReference type="Rhea" id="RHEA:16597"/>
        <dbReference type="ChEBI" id="CHEBI:15378"/>
        <dbReference type="ChEBI" id="CHEBI:28938"/>
        <dbReference type="ChEBI" id="CHEBI:30616"/>
        <dbReference type="ChEBI" id="CHEBI:37563"/>
        <dbReference type="ChEBI" id="CHEBI:43474"/>
        <dbReference type="ChEBI" id="CHEBI:46398"/>
        <dbReference type="ChEBI" id="CHEBI:456216"/>
    </reaction>
</comment>
<comment type="activity regulation">
    <text evidence="1">Allosterically activated by GTP, when glutamine is the substrate; GTP has no effect on the reaction when ammonia is the substrate. The allosteric effector GTP functions by stabilizing the protein conformation that binds the tetrahedral intermediate(s) formed during glutamine hydrolysis. Inhibited by the product CTP, via allosteric rather than competitive inhibition.</text>
</comment>
<comment type="pathway">
    <text evidence="1">Pyrimidine metabolism; CTP biosynthesis via de novo pathway; CTP from UDP: step 2/2.</text>
</comment>
<comment type="subunit">
    <text evidence="1">Homotetramer.</text>
</comment>
<comment type="miscellaneous">
    <text evidence="1">CTPSs have evolved a hybrid strategy for distinguishing between UTP and CTP. The overlapping regions of the product feedback inhibitory and substrate sites recognize a common feature in both compounds, the triphosphate moiety. To differentiate isosteric substrate and product pyrimidine rings, an additional pocket far from the expected kinase/ligase catalytic site, specifically recognizes the cytosine and ribose portions of the product inhibitor.</text>
</comment>
<comment type="similarity">
    <text evidence="1">Belongs to the CTP synthase family.</text>
</comment>
<dbReference type="EC" id="6.3.4.2" evidence="1"/>
<dbReference type="EMBL" id="CP000967">
    <property type="protein sequence ID" value="ACD58293.1"/>
    <property type="molecule type" value="Genomic_DNA"/>
</dbReference>
<dbReference type="RefSeq" id="WP_011259532.1">
    <property type="nucleotide sequence ID" value="NC_010717.2"/>
</dbReference>
<dbReference type="SMR" id="B2SUA3"/>
<dbReference type="MEROPS" id="C26.964"/>
<dbReference type="KEGG" id="xop:PXO_00174"/>
<dbReference type="eggNOG" id="COG0504">
    <property type="taxonomic scope" value="Bacteria"/>
</dbReference>
<dbReference type="HOGENOM" id="CLU_011675_5_0_6"/>
<dbReference type="UniPathway" id="UPA00159">
    <property type="reaction ID" value="UER00277"/>
</dbReference>
<dbReference type="Proteomes" id="UP000001740">
    <property type="component" value="Chromosome"/>
</dbReference>
<dbReference type="GO" id="GO:0005829">
    <property type="term" value="C:cytosol"/>
    <property type="evidence" value="ECO:0007669"/>
    <property type="project" value="TreeGrafter"/>
</dbReference>
<dbReference type="GO" id="GO:0005524">
    <property type="term" value="F:ATP binding"/>
    <property type="evidence" value="ECO:0007669"/>
    <property type="project" value="UniProtKB-KW"/>
</dbReference>
<dbReference type="GO" id="GO:0003883">
    <property type="term" value="F:CTP synthase activity"/>
    <property type="evidence" value="ECO:0007669"/>
    <property type="project" value="UniProtKB-UniRule"/>
</dbReference>
<dbReference type="GO" id="GO:0004359">
    <property type="term" value="F:glutaminase activity"/>
    <property type="evidence" value="ECO:0007669"/>
    <property type="project" value="RHEA"/>
</dbReference>
<dbReference type="GO" id="GO:0042802">
    <property type="term" value="F:identical protein binding"/>
    <property type="evidence" value="ECO:0007669"/>
    <property type="project" value="TreeGrafter"/>
</dbReference>
<dbReference type="GO" id="GO:0046872">
    <property type="term" value="F:metal ion binding"/>
    <property type="evidence" value="ECO:0007669"/>
    <property type="project" value="UniProtKB-KW"/>
</dbReference>
<dbReference type="GO" id="GO:0044210">
    <property type="term" value="P:'de novo' CTP biosynthetic process"/>
    <property type="evidence" value="ECO:0007669"/>
    <property type="project" value="UniProtKB-UniRule"/>
</dbReference>
<dbReference type="GO" id="GO:0019856">
    <property type="term" value="P:pyrimidine nucleobase biosynthetic process"/>
    <property type="evidence" value="ECO:0007669"/>
    <property type="project" value="TreeGrafter"/>
</dbReference>
<dbReference type="CDD" id="cd03113">
    <property type="entry name" value="CTPS_N"/>
    <property type="match status" value="1"/>
</dbReference>
<dbReference type="CDD" id="cd01746">
    <property type="entry name" value="GATase1_CTP_Synthase"/>
    <property type="match status" value="1"/>
</dbReference>
<dbReference type="FunFam" id="3.40.50.300:FF:000009">
    <property type="entry name" value="CTP synthase"/>
    <property type="match status" value="1"/>
</dbReference>
<dbReference type="FunFam" id="3.40.50.880:FF:000002">
    <property type="entry name" value="CTP synthase"/>
    <property type="match status" value="1"/>
</dbReference>
<dbReference type="Gene3D" id="3.40.50.880">
    <property type="match status" value="1"/>
</dbReference>
<dbReference type="Gene3D" id="3.40.50.300">
    <property type="entry name" value="P-loop containing nucleotide triphosphate hydrolases"/>
    <property type="match status" value="1"/>
</dbReference>
<dbReference type="HAMAP" id="MF_01227">
    <property type="entry name" value="PyrG"/>
    <property type="match status" value="1"/>
</dbReference>
<dbReference type="InterPro" id="IPR029062">
    <property type="entry name" value="Class_I_gatase-like"/>
</dbReference>
<dbReference type="InterPro" id="IPR004468">
    <property type="entry name" value="CTP_synthase"/>
</dbReference>
<dbReference type="InterPro" id="IPR017456">
    <property type="entry name" value="CTP_synthase_N"/>
</dbReference>
<dbReference type="InterPro" id="IPR017926">
    <property type="entry name" value="GATASE"/>
</dbReference>
<dbReference type="InterPro" id="IPR033828">
    <property type="entry name" value="GATase1_CTP_Synthase"/>
</dbReference>
<dbReference type="InterPro" id="IPR027417">
    <property type="entry name" value="P-loop_NTPase"/>
</dbReference>
<dbReference type="NCBIfam" id="NF003792">
    <property type="entry name" value="PRK05380.1"/>
    <property type="match status" value="1"/>
</dbReference>
<dbReference type="NCBIfam" id="TIGR00337">
    <property type="entry name" value="PyrG"/>
    <property type="match status" value="1"/>
</dbReference>
<dbReference type="PANTHER" id="PTHR11550">
    <property type="entry name" value="CTP SYNTHASE"/>
    <property type="match status" value="1"/>
</dbReference>
<dbReference type="PANTHER" id="PTHR11550:SF0">
    <property type="entry name" value="CTP SYNTHASE-RELATED"/>
    <property type="match status" value="1"/>
</dbReference>
<dbReference type="Pfam" id="PF06418">
    <property type="entry name" value="CTP_synth_N"/>
    <property type="match status" value="1"/>
</dbReference>
<dbReference type="Pfam" id="PF00117">
    <property type="entry name" value="GATase"/>
    <property type="match status" value="1"/>
</dbReference>
<dbReference type="SUPFAM" id="SSF52317">
    <property type="entry name" value="Class I glutamine amidotransferase-like"/>
    <property type="match status" value="1"/>
</dbReference>
<dbReference type="SUPFAM" id="SSF52540">
    <property type="entry name" value="P-loop containing nucleoside triphosphate hydrolases"/>
    <property type="match status" value="1"/>
</dbReference>
<dbReference type="PROSITE" id="PS51273">
    <property type="entry name" value="GATASE_TYPE_1"/>
    <property type="match status" value="1"/>
</dbReference>
<organism>
    <name type="scientific">Xanthomonas oryzae pv. oryzae (strain PXO99A)</name>
    <dbReference type="NCBI Taxonomy" id="360094"/>
    <lineage>
        <taxon>Bacteria</taxon>
        <taxon>Pseudomonadati</taxon>
        <taxon>Pseudomonadota</taxon>
        <taxon>Gammaproteobacteria</taxon>
        <taxon>Lysobacterales</taxon>
        <taxon>Lysobacteraceae</taxon>
        <taxon>Xanthomonas</taxon>
    </lineage>
</organism>
<gene>
    <name evidence="1" type="primary">pyrG</name>
    <name type="ordered locus">PXO_00174</name>
</gene>
<proteinExistence type="inferred from homology"/>
<evidence type="ECO:0000255" key="1">
    <source>
        <dbReference type="HAMAP-Rule" id="MF_01227"/>
    </source>
</evidence>
<accession>B2SUA3</accession>
<sequence length="554" mass="61559">MTPLIFVTGGVVSSLGKGIAAASLASILEARGLKVTMMKLDPYINVDPGTMSPFQHGEVYVTDDGAETDLDLGHYERYVRTRLSRKNSVTTGRIYENVIRKERRGDYLGATVQVIPHITDEIRRCIDEATAGFDVALIEIGGTVGDIESLPFLEAIRQVRTERGAEKAMFMHLTLVPYIAAAGELKTKPTQHSVKELRSIGIQPDVLLCRSEQAVPDSERRKIALFTNVSERAVISCPDIDVLYGMPLELLRQGLDELVIVQFKLRDKVAAADLSEWAAVVDAVKHPLDEVTIAVVGKYVDHQDAYKSVAEALRHGGLRQRTKVNLKWLEAQDLERSDMAALQDIDGILVPGGFGDRGFEGKVQTSKFAREHKVPYFGICYGMQAAVVDYARHVADLDAANSTENDRQSPHPVIGLITEWRTATGEVEKRDEKSDLGGTMRLGLQEQRLKPGTLARELYGKDVVAERHRHRYEFNNRYRTQLEDAGLVISGKSMDDTLVEVVELPRDTHPWFLACQAHPEFLSTPRDGHPLFIGFVRAAREKKAGGKLLKEARA</sequence>
<protein>
    <recommendedName>
        <fullName evidence="1">CTP synthase</fullName>
        <ecNumber evidence="1">6.3.4.2</ecNumber>
    </recommendedName>
    <alternativeName>
        <fullName evidence="1">Cytidine 5'-triphosphate synthase</fullName>
    </alternativeName>
    <alternativeName>
        <fullName evidence="1">Cytidine triphosphate synthetase</fullName>
        <shortName evidence="1">CTP synthetase</shortName>
        <shortName evidence="1">CTPS</shortName>
    </alternativeName>
    <alternativeName>
        <fullName evidence="1">UTP--ammonia ligase</fullName>
    </alternativeName>
</protein>
<feature type="chain" id="PRO_1000139603" description="CTP synthase">
    <location>
        <begin position="1"/>
        <end position="554"/>
    </location>
</feature>
<feature type="domain" description="Glutamine amidotransferase type-1" evidence="1">
    <location>
        <begin position="292"/>
        <end position="545"/>
    </location>
</feature>
<feature type="region of interest" description="Amidoligase domain" evidence="1">
    <location>
        <begin position="1"/>
        <end position="265"/>
    </location>
</feature>
<feature type="active site" description="Nucleophile; for glutamine hydrolysis" evidence="1">
    <location>
        <position position="380"/>
    </location>
</feature>
<feature type="active site" evidence="1">
    <location>
        <position position="518"/>
    </location>
</feature>
<feature type="active site" evidence="1">
    <location>
        <position position="520"/>
    </location>
</feature>
<feature type="binding site" evidence="1">
    <location>
        <position position="13"/>
    </location>
    <ligand>
        <name>CTP</name>
        <dbReference type="ChEBI" id="CHEBI:37563"/>
        <note>allosteric inhibitor</note>
    </ligand>
</feature>
<feature type="binding site" evidence="1">
    <location>
        <position position="13"/>
    </location>
    <ligand>
        <name>UTP</name>
        <dbReference type="ChEBI" id="CHEBI:46398"/>
    </ligand>
</feature>
<feature type="binding site" evidence="1">
    <location>
        <begin position="14"/>
        <end position="19"/>
    </location>
    <ligand>
        <name>ATP</name>
        <dbReference type="ChEBI" id="CHEBI:30616"/>
    </ligand>
</feature>
<feature type="binding site" evidence="1">
    <location>
        <position position="71"/>
    </location>
    <ligand>
        <name>ATP</name>
        <dbReference type="ChEBI" id="CHEBI:30616"/>
    </ligand>
</feature>
<feature type="binding site" evidence="1">
    <location>
        <position position="71"/>
    </location>
    <ligand>
        <name>Mg(2+)</name>
        <dbReference type="ChEBI" id="CHEBI:18420"/>
    </ligand>
</feature>
<feature type="binding site" evidence="1">
    <location>
        <position position="139"/>
    </location>
    <ligand>
        <name>Mg(2+)</name>
        <dbReference type="ChEBI" id="CHEBI:18420"/>
    </ligand>
</feature>
<feature type="binding site" evidence="1">
    <location>
        <begin position="146"/>
        <end position="148"/>
    </location>
    <ligand>
        <name>CTP</name>
        <dbReference type="ChEBI" id="CHEBI:37563"/>
        <note>allosteric inhibitor</note>
    </ligand>
</feature>
<feature type="binding site" evidence="1">
    <location>
        <begin position="186"/>
        <end position="191"/>
    </location>
    <ligand>
        <name>CTP</name>
        <dbReference type="ChEBI" id="CHEBI:37563"/>
        <note>allosteric inhibitor</note>
    </ligand>
</feature>
<feature type="binding site" evidence="1">
    <location>
        <begin position="186"/>
        <end position="191"/>
    </location>
    <ligand>
        <name>UTP</name>
        <dbReference type="ChEBI" id="CHEBI:46398"/>
    </ligand>
</feature>
<feature type="binding site" evidence="1">
    <location>
        <position position="222"/>
    </location>
    <ligand>
        <name>CTP</name>
        <dbReference type="ChEBI" id="CHEBI:37563"/>
        <note>allosteric inhibitor</note>
    </ligand>
</feature>
<feature type="binding site" evidence="1">
    <location>
        <position position="222"/>
    </location>
    <ligand>
        <name>UTP</name>
        <dbReference type="ChEBI" id="CHEBI:46398"/>
    </ligand>
</feature>
<feature type="binding site" evidence="1">
    <location>
        <position position="353"/>
    </location>
    <ligand>
        <name>L-glutamine</name>
        <dbReference type="ChEBI" id="CHEBI:58359"/>
    </ligand>
</feature>
<feature type="binding site" evidence="1">
    <location>
        <begin position="381"/>
        <end position="384"/>
    </location>
    <ligand>
        <name>L-glutamine</name>
        <dbReference type="ChEBI" id="CHEBI:58359"/>
    </ligand>
</feature>
<feature type="binding site" evidence="1">
    <location>
        <position position="404"/>
    </location>
    <ligand>
        <name>L-glutamine</name>
        <dbReference type="ChEBI" id="CHEBI:58359"/>
    </ligand>
</feature>
<feature type="binding site" evidence="1">
    <location>
        <position position="471"/>
    </location>
    <ligand>
        <name>L-glutamine</name>
        <dbReference type="ChEBI" id="CHEBI:58359"/>
    </ligand>
</feature>